<feature type="chain" id="PRO_0000232585" description="Translation initiation factor IF-2">
    <location>
        <begin position="1"/>
        <end position="599"/>
    </location>
</feature>
<feature type="domain" description="tr-type G">
    <location>
        <begin position="111"/>
        <end position="278"/>
    </location>
</feature>
<feature type="region of interest" description="G1" evidence="1">
    <location>
        <begin position="120"/>
        <end position="127"/>
    </location>
</feature>
<feature type="region of interest" description="G2" evidence="1">
    <location>
        <begin position="145"/>
        <end position="149"/>
    </location>
</feature>
<feature type="region of interest" description="G3" evidence="1">
    <location>
        <begin position="166"/>
        <end position="169"/>
    </location>
</feature>
<feature type="region of interest" description="G4" evidence="1">
    <location>
        <begin position="220"/>
        <end position="223"/>
    </location>
</feature>
<feature type="region of interest" description="G5" evidence="1">
    <location>
        <begin position="256"/>
        <end position="258"/>
    </location>
</feature>
<feature type="binding site" evidence="2">
    <location>
        <begin position="120"/>
        <end position="127"/>
    </location>
    <ligand>
        <name>GTP</name>
        <dbReference type="ChEBI" id="CHEBI:37565"/>
    </ligand>
</feature>
<feature type="binding site" evidence="2">
    <location>
        <begin position="166"/>
        <end position="170"/>
    </location>
    <ligand>
        <name>GTP</name>
        <dbReference type="ChEBI" id="CHEBI:37565"/>
    </ligand>
</feature>
<feature type="binding site" evidence="2">
    <location>
        <begin position="220"/>
        <end position="223"/>
    </location>
    <ligand>
        <name>GTP</name>
        <dbReference type="ChEBI" id="CHEBI:37565"/>
    </ligand>
</feature>
<evidence type="ECO:0000250" key="1"/>
<evidence type="ECO:0000255" key="2">
    <source>
        <dbReference type="HAMAP-Rule" id="MF_00100"/>
    </source>
</evidence>
<organism>
    <name type="scientific">Mesomycoplasma hyopneumoniae (strain 232)</name>
    <name type="common">Mycoplasma hyopneumoniae</name>
    <dbReference type="NCBI Taxonomy" id="295358"/>
    <lineage>
        <taxon>Bacteria</taxon>
        <taxon>Bacillati</taxon>
        <taxon>Mycoplasmatota</taxon>
        <taxon>Mycoplasmoidales</taxon>
        <taxon>Metamycoplasmataceae</taxon>
        <taxon>Mesomycoplasma</taxon>
    </lineage>
</organism>
<proteinExistence type="inferred from homology"/>
<gene>
    <name evidence="2" type="primary">infB</name>
    <name type="ordered locus">mhp601</name>
</gene>
<accession>Q5ZZV6</accession>
<keyword id="KW-0963">Cytoplasm</keyword>
<keyword id="KW-0342">GTP-binding</keyword>
<keyword id="KW-0396">Initiation factor</keyword>
<keyword id="KW-0547">Nucleotide-binding</keyword>
<keyword id="KW-0648">Protein biosynthesis</keyword>
<name>IF2_MESH2</name>
<protein>
    <recommendedName>
        <fullName evidence="2">Translation initiation factor IF-2</fullName>
    </recommendedName>
</protein>
<dbReference type="EMBL" id="AE017332">
    <property type="protein sequence ID" value="AAV27988.1"/>
    <property type="molecule type" value="Genomic_DNA"/>
</dbReference>
<dbReference type="RefSeq" id="WP_011206432.1">
    <property type="nucleotide sequence ID" value="NC_006360.1"/>
</dbReference>
<dbReference type="SMR" id="Q5ZZV6"/>
<dbReference type="GeneID" id="41334882"/>
<dbReference type="KEGG" id="mhy:mhp601"/>
<dbReference type="eggNOG" id="COG0532">
    <property type="taxonomic scope" value="Bacteria"/>
</dbReference>
<dbReference type="HOGENOM" id="CLU_006301_5_1_14"/>
<dbReference type="PhylomeDB" id="Q5ZZV6"/>
<dbReference type="Proteomes" id="UP000006822">
    <property type="component" value="Chromosome"/>
</dbReference>
<dbReference type="GO" id="GO:0005829">
    <property type="term" value="C:cytosol"/>
    <property type="evidence" value="ECO:0007669"/>
    <property type="project" value="TreeGrafter"/>
</dbReference>
<dbReference type="GO" id="GO:0005525">
    <property type="term" value="F:GTP binding"/>
    <property type="evidence" value="ECO:0007669"/>
    <property type="project" value="UniProtKB-KW"/>
</dbReference>
<dbReference type="GO" id="GO:0003924">
    <property type="term" value="F:GTPase activity"/>
    <property type="evidence" value="ECO:0007669"/>
    <property type="project" value="UniProtKB-UniRule"/>
</dbReference>
<dbReference type="GO" id="GO:0003743">
    <property type="term" value="F:translation initiation factor activity"/>
    <property type="evidence" value="ECO:0007669"/>
    <property type="project" value="UniProtKB-UniRule"/>
</dbReference>
<dbReference type="CDD" id="cd01887">
    <property type="entry name" value="IF2_eIF5B"/>
    <property type="match status" value="1"/>
</dbReference>
<dbReference type="CDD" id="cd03702">
    <property type="entry name" value="IF2_mtIF2_II"/>
    <property type="match status" value="1"/>
</dbReference>
<dbReference type="CDD" id="cd03692">
    <property type="entry name" value="mtIF2_IVc"/>
    <property type="match status" value="1"/>
</dbReference>
<dbReference type="FunFam" id="2.40.30.10:FF:000008">
    <property type="entry name" value="Translation initiation factor IF-2"/>
    <property type="match status" value="1"/>
</dbReference>
<dbReference type="FunFam" id="2.40.30.10:FF:000054">
    <property type="entry name" value="Translation initiation factor IF-2"/>
    <property type="match status" value="1"/>
</dbReference>
<dbReference type="FunFam" id="3.40.50.10050:FF:000001">
    <property type="entry name" value="Translation initiation factor IF-2"/>
    <property type="match status" value="1"/>
</dbReference>
<dbReference type="FunFam" id="3.40.50.300:FF:000019">
    <property type="entry name" value="Translation initiation factor IF-2"/>
    <property type="match status" value="1"/>
</dbReference>
<dbReference type="Gene3D" id="3.40.50.300">
    <property type="entry name" value="P-loop containing nucleotide triphosphate hydrolases"/>
    <property type="match status" value="1"/>
</dbReference>
<dbReference type="Gene3D" id="2.40.30.10">
    <property type="entry name" value="Translation factors"/>
    <property type="match status" value="2"/>
</dbReference>
<dbReference type="Gene3D" id="3.40.50.10050">
    <property type="entry name" value="Translation initiation factor IF- 2, domain 3"/>
    <property type="match status" value="1"/>
</dbReference>
<dbReference type="HAMAP" id="MF_00100_B">
    <property type="entry name" value="IF_2_B"/>
    <property type="match status" value="1"/>
</dbReference>
<dbReference type="InterPro" id="IPR053905">
    <property type="entry name" value="EF-G-like_DII"/>
</dbReference>
<dbReference type="InterPro" id="IPR044145">
    <property type="entry name" value="IF2_II"/>
</dbReference>
<dbReference type="InterPro" id="IPR006847">
    <property type="entry name" value="IF2_N"/>
</dbReference>
<dbReference type="InterPro" id="IPR027417">
    <property type="entry name" value="P-loop_NTPase"/>
</dbReference>
<dbReference type="InterPro" id="IPR005225">
    <property type="entry name" value="Small_GTP-bd"/>
</dbReference>
<dbReference type="InterPro" id="IPR000795">
    <property type="entry name" value="T_Tr_GTP-bd_dom"/>
</dbReference>
<dbReference type="InterPro" id="IPR000178">
    <property type="entry name" value="TF_IF2_bacterial-like"/>
</dbReference>
<dbReference type="InterPro" id="IPR015760">
    <property type="entry name" value="TIF_IF2"/>
</dbReference>
<dbReference type="InterPro" id="IPR023115">
    <property type="entry name" value="TIF_IF2_dom3"/>
</dbReference>
<dbReference type="InterPro" id="IPR036925">
    <property type="entry name" value="TIF_IF2_dom3_sf"/>
</dbReference>
<dbReference type="InterPro" id="IPR009000">
    <property type="entry name" value="Transl_B-barrel_sf"/>
</dbReference>
<dbReference type="NCBIfam" id="TIGR00487">
    <property type="entry name" value="IF-2"/>
    <property type="match status" value="1"/>
</dbReference>
<dbReference type="NCBIfam" id="TIGR00231">
    <property type="entry name" value="small_GTP"/>
    <property type="match status" value="1"/>
</dbReference>
<dbReference type="PANTHER" id="PTHR43381:SF5">
    <property type="entry name" value="TR-TYPE G DOMAIN-CONTAINING PROTEIN"/>
    <property type="match status" value="1"/>
</dbReference>
<dbReference type="PANTHER" id="PTHR43381">
    <property type="entry name" value="TRANSLATION INITIATION FACTOR IF-2-RELATED"/>
    <property type="match status" value="1"/>
</dbReference>
<dbReference type="Pfam" id="PF22042">
    <property type="entry name" value="EF-G_D2"/>
    <property type="match status" value="1"/>
</dbReference>
<dbReference type="Pfam" id="PF00009">
    <property type="entry name" value="GTP_EFTU"/>
    <property type="match status" value="1"/>
</dbReference>
<dbReference type="Pfam" id="PF11987">
    <property type="entry name" value="IF-2"/>
    <property type="match status" value="1"/>
</dbReference>
<dbReference type="Pfam" id="PF04760">
    <property type="entry name" value="IF2_N"/>
    <property type="match status" value="1"/>
</dbReference>
<dbReference type="PRINTS" id="PR00315">
    <property type="entry name" value="ELONGATNFCT"/>
</dbReference>
<dbReference type="SUPFAM" id="SSF52156">
    <property type="entry name" value="Initiation factor IF2/eIF5b, domain 3"/>
    <property type="match status" value="1"/>
</dbReference>
<dbReference type="SUPFAM" id="SSF52540">
    <property type="entry name" value="P-loop containing nucleoside triphosphate hydrolases"/>
    <property type="match status" value="1"/>
</dbReference>
<dbReference type="SUPFAM" id="SSF50447">
    <property type="entry name" value="Translation proteins"/>
    <property type="match status" value="2"/>
</dbReference>
<dbReference type="PROSITE" id="PS51722">
    <property type="entry name" value="G_TR_2"/>
    <property type="match status" value="1"/>
</dbReference>
<sequence>MKKSQKRISNVSEIKAQLKTVETKVHNGVFLFSGIMTIAELAQKINVSVNQIITYFFHQAKMYNLNHSLSEDEIAEICLEFGLDFKKEVQIDASNFMEEVSILDQDKDLSPRPPIITVMGHVDHGKTTLLDYIRKTNIAKNEKGGITQHTGAYQVVFQGHIINFIDTPGHEAFTQMRARGAKVTDIIVLVVAADDGVMPQTKEAINHAAAANVPIIVFVNKMDKPNKDVDRIKNELSALNIVTEEWGGSNIFVYGSALTGQGIDTLFSSILLLAEILELKANKNRYPIGTVIEAKLHHNKGTIATLMVQNGTLMVRDFIVAGYQYGRIRSLENTNGQPIKFAPPGTPVIVTGLNYVPEAGDKFFGFHEEKFAKQLALERKQSEKISKTKVQTKQQTKEKTLNIIIKADVAGIAQALHSTIEKLASKQVHIHILHSGVGIVNKADILLAQTSNSIIYAFNLQIPAAIKAQAKQAQVEIREHTIIYKIVDEIKKQVRGMREIRYELQQIGTAKIIAKFWFSKVGSIAGCSVLSGKFVENCKIELWRNSKLIHSGKIESLQRDKNPVKEVQVGNEFGTHIYKFNDIEIGDELKAFLDVEIEE</sequence>
<reference key="1">
    <citation type="journal article" date="2004" name="J. Bacteriol.">
        <title>The genome sequence of Mycoplasma hyopneumoniae strain 232, the agent of swine mycoplasmosis.</title>
        <authorList>
            <person name="Minion F.C."/>
            <person name="Lefkowitz E.J."/>
            <person name="Madsen M.L."/>
            <person name="Cleary B.J."/>
            <person name="Swartzell S.M."/>
            <person name="Mahairas G.G."/>
        </authorList>
    </citation>
    <scope>NUCLEOTIDE SEQUENCE [LARGE SCALE GENOMIC DNA]</scope>
    <source>
        <strain>232</strain>
    </source>
</reference>
<comment type="function">
    <text evidence="2">One of the essential components for the initiation of protein synthesis. Protects formylmethionyl-tRNA from spontaneous hydrolysis and promotes its binding to the 30S ribosomal subunits. Also involved in the hydrolysis of GTP during the formation of the 70S ribosomal complex.</text>
</comment>
<comment type="subcellular location">
    <subcellularLocation>
        <location evidence="2">Cytoplasm</location>
    </subcellularLocation>
</comment>
<comment type="similarity">
    <text evidence="2">Belongs to the TRAFAC class translation factor GTPase superfamily. Classic translation factor GTPase family. IF-2 subfamily.</text>
</comment>